<comment type="catalytic activity">
    <reaction>
        <text>2-(N(omega)-L-arginino)succinate = fumarate + L-arginine</text>
        <dbReference type="Rhea" id="RHEA:24020"/>
        <dbReference type="ChEBI" id="CHEBI:29806"/>
        <dbReference type="ChEBI" id="CHEBI:32682"/>
        <dbReference type="ChEBI" id="CHEBI:57472"/>
        <dbReference type="EC" id="4.3.2.1"/>
    </reaction>
</comment>
<comment type="catalytic activity">
    <reaction>
        <text>L-glutamate + acetyl-CoA = N-acetyl-L-glutamate + CoA + H(+)</text>
        <dbReference type="Rhea" id="RHEA:24292"/>
        <dbReference type="ChEBI" id="CHEBI:15378"/>
        <dbReference type="ChEBI" id="CHEBI:29985"/>
        <dbReference type="ChEBI" id="CHEBI:44337"/>
        <dbReference type="ChEBI" id="CHEBI:57287"/>
        <dbReference type="ChEBI" id="CHEBI:57288"/>
        <dbReference type="EC" id="2.3.1.1"/>
    </reaction>
</comment>
<comment type="pathway">
    <text>Amino-acid biosynthesis; L-arginine biosynthesis; N(2)-acetyl-L-ornithine from L-glutamate: step 1/4.</text>
</comment>
<comment type="pathway">
    <text>Amino-acid biosynthesis; L-arginine biosynthesis; L-arginine from L-ornithine and carbamoyl phosphate: step 3/3.</text>
</comment>
<comment type="subcellular location">
    <subcellularLocation>
        <location evidence="1">Cytoplasm</location>
    </subcellularLocation>
</comment>
<comment type="miscellaneous">
    <text>In bacteria which possess the bifunctional enzyme ornithine acetyltransferase/N-acetylglutamate synthase (ArgJ), ArgA fulfills an anaplerotic role.</text>
</comment>
<comment type="similarity">
    <text evidence="2">In the N-terminal section; belongs to the lyase 1 family. Argininosuccinate lyase subfamily.</text>
</comment>
<comment type="similarity">
    <text evidence="2">In the C-terminal section; belongs to the acetyltransferase family. ArgA subfamily.</text>
</comment>
<accession>Q9K3D6</accession>
<keyword id="KW-0012">Acyltransferase</keyword>
<keyword id="KW-0028">Amino-acid biosynthesis</keyword>
<keyword id="KW-0055">Arginine biosynthesis</keyword>
<keyword id="KW-0963">Cytoplasm</keyword>
<keyword id="KW-0456">Lyase</keyword>
<keyword id="KW-0511">Multifunctional enzyme</keyword>
<keyword id="KW-0808">Transferase</keyword>
<organism>
    <name type="scientific">Moritella abyssi</name>
    <dbReference type="NCBI Taxonomy" id="111292"/>
    <lineage>
        <taxon>Bacteria</taxon>
        <taxon>Pseudomonadati</taxon>
        <taxon>Pseudomonadota</taxon>
        <taxon>Gammaproteobacteria</taxon>
        <taxon>Alteromonadales</taxon>
        <taxon>Moritellaceae</taxon>
        <taxon>Moritella</taxon>
    </lineage>
</organism>
<reference key="1">
    <citation type="journal article" date="2000" name="J. Bacteriol.">
        <title>Evolution of arginine biosynthesis in the bacterial domain: novel gene-enzyme relationships from psychrophilic Moritella strains (Vibrionaceae) and evolutionary significance of N-alpha-acetyl ornithinase.</title>
        <authorList>
            <person name="Xu Y."/>
            <person name="Liang Z."/>
            <person name="Legrain C."/>
            <person name="Ruger H.J."/>
            <person name="Glansdorff N."/>
        </authorList>
    </citation>
    <scope>NUCLEOTIDE SEQUENCE [GENOMIC DNA]</scope>
    <source>
        <strain>JCM 11436 / CIP 108121 / LMG 21258 / 2693</strain>
    </source>
</reference>
<sequence>MALWGGRFSQAADARFKSFNDSLRFDYRLAEQDITGSVAWSKALVSVGILTQDEQLTIEAALNDLKLAVLENPEQILQSDAEDIHSWVETQLIAKVGDLGKKLHTGRSRNDQVATDLKLWCKQQGQQLLMQLDKTQQQLVSLAREHQHTVLPGYTHLQRAQPVTFSHWCLAYVEMLERDFSRLTDCLKRLDTCPLGSGALAGTAYPMDRTELAHSLGFGSATLNSLDSVSDRDHVMELMCTASMSMIHLSRLAEDLIFYNSGESNFIELADAVTSGSSLMPQKKNPDALELIRGKTGRVFGSLSAMLMTLKALPLAYNKDMQEDKEGLFDALDTWSDCLEMAAMSLVGMKINEARTKEAALGGYSNATELADYLVAKGVPFRDSHHIVGEAVVAAIAKGVPLEALTLAEFKAFDVLIEDDVYHHLSLDETLAKRKALGGVSPVQVEFALTNAEKRLEERDTSGISIRAARLTDLDDIERMVNYWANIGENLPRSRSDLVKAVGTFAVTEKHNQVTGCASIYVYDTGLAELRSLGIEPGYQGGGQGKAVVEYMLRKAEQMAIQKVFVLTRVPEFFMKLGFRSTSKSMLPEKVLKDCDMCPRQHACDEVALEFKLNVVGQTINLKAEKLAS</sequence>
<proteinExistence type="inferred from homology"/>
<protein>
    <recommendedName>
        <fullName>Bifunctional protein ArgHA</fullName>
    </recommendedName>
    <domain>
        <recommendedName>
            <fullName>Argininosuccinate lyase</fullName>
            <shortName>ASAL</shortName>
            <shortName>Arginosuccinase</shortName>
            <ecNumber>4.3.2.1</ecNumber>
        </recommendedName>
    </domain>
    <domain>
        <recommendedName>
            <fullName>Amino-acid acetyltransferase</fullName>
            <ecNumber>2.3.1.1</ecNumber>
        </recommendedName>
        <alternativeName>
            <fullName>N-acetylglutamate synthase</fullName>
            <shortName>AGS</shortName>
            <shortName>NAGS</shortName>
        </alternativeName>
    </domain>
</protein>
<gene>
    <name type="primary">argHA</name>
</gene>
<feature type="chain" id="PRO_0000186813" description="Bifunctional protein ArgHA">
    <location>
        <begin position="1"/>
        <end position="629"/>
    </location>
</feature>
<feature type="domain" description="N-acetyltransferase">
    <location>
        <begin position="464"/>
        <end position="598"/>
    </location>
</feature>
<feature type="region of interest" description="Argininosuccinate lyase">
    <location>
        <begin position="1"/>
        <end position="499"/>
    </location>
</feature>
<feature type="region of interest" description="Amino-acid acetyltransferase">
    <location>
        <begin position="500"/>
        <end position="629"/>
    </location>
</feature>
<name>ARGHA_MORAB</name>
<evidence type="ECO:0000250" key="1"/>
<evidence type="ECO:0000305" key="2"/>
<dbReference type="EC" id="4.3.2.1"/>
<dbReference type="EC" id="2.3.1.1"/>
<dbReference type="EMBL" id="AJ252021">
    <property type="protein sequence ID" value="CAB95024.1"/>
    <property type="molecule type" value="Genomic_DNA"/>
</dbReference>
<dbReference type="SMR" id="Q9K3D6"/>
<dbReference type="UniPathway" id="UPA00068">
    <property type="reaction ID" value="UER00106"/>
</dbReference>
<dbReference type="UniPathway" id="UPA00068">
    <property type="reaction ID" value="UER00114"/>
</dbReference>
<dbReference type="GO" id="GO:0005829">
    <property type="term" value="C:cytosol"/>
    <property type="evidence" value="ECO:0007669"/>
    <property type="project" value="TreeGrafter"/>
</dbReference>
<dbReference type="GO" id="GO:0004056">
    <property type="term" value="F:argininosuccinate lyase activity"/>
    <property type="evidence" value="ECO:0007669"/>
    <property type="project" value="UniProtKB-UniRule"/>
</dbReference>
<dbReference type="GO" id="GO:0004042">
    <property type="term" value="F:L-glutamate N-acetyltransferase activity"/>
    <property type="evidence" value="ECO:0007669"/>
    <property type="project" value="RHEA"/>
</dbReference>
<dbReference type="GO" id="GO:0042450">
    <property type="term" value="P:arginine biosynthetic process via ornithine"/>
    <property type="evidence" value="ECO:0007669"/>
    <property type="project" value="InterPro"/>
</dbReference>
<dbReference type="GO" id="GO:0006526">
    <property type="term" value="P:L-arginine biosynthetic process"/>
    <property type="evidence" value="ECO:0007669"/>
    <property type="project" value="UniProtKB-UniRule"/>
</dbReference>
<dbReference type="CDD" id="cd01359">
    <property type="entry name" value="Argininosuccinate_lyase"/>
    <property type="match status" value="1"/>
</dbReference>
<dbReference type="CDD" id="cd04301">
    <property type="entry name" value="NAT_SF"/>
    <property type="match status" value="1"/>
</dbReference>
<dbReference type="FunFam" id="1.10.40.30:FF:000001">
    <property type="entry name" value="Argininosuccinate lyase"/>
    <property type="match status" value="1"/>
</dbReference>
<dbReference type="FunFam" id="1.20.200.10:FF:000006">
    <property type="entry name" value="Argininosuccinate lyase"/>
    <property type="match status" value="1"/>
</dbReference>
<dbReference type="Gene3D" id="3.40.630.30">
    <property type="match status" value="1"/>
</dbReference>
<dbReference type="Gene3D" id="1.10.40.30">
    <property type="entry name" value="Fumarase/aspartase (C-terminal domain)"/>
    <property type="match status" value="1"/>
</dbReference>
<dbReference type="Gene3D" id="1.20.200.10">
    <property type="entry name" value="Fumarase/aspartase (Central domain)"/>
    <property type="match status" value="1"/>
</dbReference>
<dbReference type="Gene3D" id="1.10.275.10">
    <property type="entry name" value="Fumarase/aspartase (N-terminal domain)"/>
    <property type="match status" value="1"/>
</dbReference>
<dbReference type="HAMAP" id="MF_00006">
    <property type="entry name" value="Arg_succ_lyase"/>
    <property type="match status" value="1"/>
</dbReference>
<dbReference type="InterPro" id="IPR016181">
    <property type="entry name" value="Acyl_CoA_acyltransferase"/>
</dbReference>
<dbReference type="InterPro" id="IPR029419">
    <property type="entry name" value="Arg_succ_lyase_C"/>
</dbReference>
<dbReference type="InterPro" id="IPR009049">
    <property type="entry name" value="Argininosuccinate_lyase"/>
</dbReference>
<dbReference type="InterPro" id="IPR011244">
    <property type="entry name" value="ASAL_AGS_AcTrfase"/>
</dbReference>
<dbReference type="InterPro" id="IPR024083">
    <property type="entry name" value="Fumarase/histidase_N"/>
</dbReference>
<dbReference type="InterPro" id="IPR020557">
    <property type="entry name" value="Fumarate_lyase_CS"/>
</dbReference>
<dbReference type="InterPro" id="IPR000362">
    <property type="entry name" value="Fumarate_lyase_fam"/>
</dbReference>
<dbReference type="InterPro" id="IPR022761">
    <property type="entry name" value="Fumarate_lyase_N"/>
</dbReference>
<dbReference type="InterPro" id="IPR000182">
    <property type="entry name" value="GNAT_dom"/>
</dbReference>
<dbReference type="InterPro" id="IPR008948">
    <property type="entry name" value="L-Aspartase-like"/>
</dbReference>
<dbReference type="NCBIfam" id="TIGR00838">
    <property type="entry name" value="argH"/>
    <property type="match status" value="1"/>
</dbReference>
<dbReference type="NCBIfam" id="NF008964">
    <property type="entry name" value="PRK12308.1"/>
    <property type="match status" value="1"/>
</dbReference>
<dbReference type="PANTHER" id="PTHR43814">
    <property type="entry name" value="ARGININOSUCCINATE LYASE"/>
    <property type="match status" value="1"/>
</dbReference>
<dbReference type="PANTHER" id="PTHR43814:SF1">
    <property type="entry name" value="ARGININOSUCCINATE LYASE"/>
    <property type="match status" value="1"/>
</dbReference>
<dbReference type="Pfam" id="PF00583">
    <property type="entry name" value="Acetyltransf_1"/>
    <property type="match status" value="1"/>
</dbReference>
<dbReference type="Pfam" id="PF14698">
    <property type="entry name" value="ASL_C2"/>
    <property type="match status" value="1"/>
</dbReference>
<dbReference type="Pfam" id="PF00206">
    <property type="entry name" value="Lyase_1"/>
    <property type="match status" value="1"/>
</dbReference>
<dbReference type="PIRSF" id="PIRSF036456">
    <property type="entry name" value="ASAL_AGS"/>
    <property type="match status" value="1"/>
</dbReference>
<dbReference type="PRINTS" id="PR00145">
    <property type="entry name" value="ARGSUCLYASE"/>
</dbReference>
<dbReference type="PRINTS" id="PR00149">
    <property type="entry name" value="FUMRATELYASE"/>
</dbReference>
<dbReference type="SUPFAM" id="SSF55729">
    <property type="entry name" value="Acyl-CoA N-acyltransferases (Nat)"/>
    <property type="match status" value="1"/>
</dbReference>
<dbReference type="SUPFAM" id="SSF48557">
    <property type="entry name" value="L-aspartase-like"/>
    <property type="match status" value="1"/>
</dbReference>
<dbReference type="PROSITE" id="PS00163">
    <property type="entry name" value="FUMARATE_LYASES"/>
    <property type="match status" value="1"/>
</dbReference>
<dbReference type="PROSITE" id="PS51186">
    <property type="entry name" value="GNAT"/>
    <property type="match status" value="1"/>
</dbReference>